<reference key="1">
    <citation type="journal article" date="2009" name="PLoS Genet.">
        <title>Organised genome dynamics in the Escherichia coli species results in highly diverse adaptive paths.</title>
        <authorList>
            <person name="Touchon M."/>
            <person name="Hoede C."/>
            <person name="Tenaillon O."/>
            <person name="Barbe V."/>
            <person name="Baeriswyl S."/>
            <person name="Bidet P."/>
            <person name="Bingen E."/>
            <person name="Bonacorsi S."/>
            <person name="Bouchier C."/>
            <person name="Bouvet O."/>
            <person name="Calteau A."/>
            <person name="Chiapello H."/>
            <person name="Clermont O."/>
            <person name="Cruveiller S."/>
            <person name="Danchin A."/>
            <person name="Diard M."/>
            <person name="Dossat C."/>
            <person name="Karoui M.E."/>
            <person name="Frapy E."/>
            <person name="Garry L."/>
            <person name="Ghigo J.M."/>
            <person name="Gilles A.M."/>
            <person name="Johnson J."/>
            <person name="Le Bouguenec C."/>
            <person name="Lescat M."/>
            <person name="Mangenot S."/>
            <person name="Martinez-Jehanne V."/>
            <person name="Matic I."/>
            <person name="Nassif X."/>
            <person name="Oztas S."/>
            <person name="Petit M.A."/>
            <person name="Pichon C."/>
            <person name="Rouy Z."/>
            <person name="Ruf C.S."/>
            <person name="Schneider D."/>
            <person name="Tourret J."/>
            <person name="Vacherie B."/>
            <person name="Vallenet D."/>
            <person name="Medigue C."/>
            <person name="Rocha E.P.C."/>
            <person name="Denamur E."/>
        </authorList>
    </citation>
    <scope>NUCLEOTIDE SEQUENCE [LARGE SCALE GENOMIC DNA]</scope>
    <source>
        <strain>UMN026 / ExPEC</strain>
    </source>
</reference>
<name>NUDC_ECOLU</name>
<protein>
    <recommendedName>
        <fullName evidence="1">NAD-capped RNA hydrolase NudC</fullName>
        <shortName evidence="1">DeNADding enzyme NudC</shortName>
        <ecNumber evidence="1">3.6.1.-</ecNumber>
    </recommendedName>
    <alternativeName>
        <fullName evidence="1">NADH pyrophosphatase</fullName>
        <ecNumber evidence="1">3.6.1.22</ecNumber>
    </alternativeName>
</protein>
<proteinExistence type="inferred from homology"/>
<comment type="function">
    <text evidence="1">mRNA decapping enzyme that specifically removes the nicotinamide adenine dinucleotide (NAD) cap from a subset of mRNAs by hydrolyzing the diphosphate linkage to produce nicotinamide mononucleotide (NMN) and 5' monophosphate mRNA. The NAD-cap is present at the 5'-end of some mRNAs and stabilizes RNA against 5'-processing. Has preference for mRNAs with a 5'-end purine. Catalyzes the hydrolysis of a broad range of dinucleotide pyrophosphates.</text>
</comment>
<comment type="catalytic activity">
    <reaction evidence="1">
        <text>a 5'-end NAD(+)-phospho-ribonucleoside in mRNA + H2O = a 5'-end phospho-adenosine-phospho-ribonucleoside in mRNA + beta-nicotinamide D-ribonucleotide + 2 H(+)</text>
        <dbReference type="Rhea" id="RHEA:60876"/>
        <dbReference type="Rhea" id="RHEA-COMP:15698"/>
        <dbReference type="Rhea" id="RHEA-COMP:15719"/>
        <dbReference type="ChEBI" id="CHEBI:14649"/>
        <dbReference type="ChEBI" id="CHEBI:15377"/>
        <dbReference type="ChEBI" id="CHEBI:15378"/>
        <dbReference type="ChEBI" id="CHEBI:144029"/>
        <dbReference type="ChEBI" id="CHEBI:144051"/>
    </reaction>
    <physiologicalReaction direction="left-to-right" evidence="1">
        <dbReference type="Rhea" id="RHEA:60877"/>
    </physiologicalReaction>
</comment>
<comment type="catalytic activity">
    <reaction evidence="1">
        <text>NAD(+) + H2O = beta-nicotinamide D-ribonucleotide + AMP + 2 H(+)</text>
        <dbReference type="Rhea" id="RHEA:11800"/>
        <dbReference type="ChEBI" id="CHEBI:14649"/>
        <dbReference type="ChEBI" id="CHEBI:15377"/>
        <dbReference type="ChEBI" id="CHEBI:15378"/>
        <dbReference type="ChEBI" id="CHEBI:57540"/>
        <dbReference type="ChEBI" id="CHEBI:456215"/>
        <dbReference type="EC" id="3.6.1.22"/>
    </reaction>
</comment>
<comment type="catalytic activity">
    <reaction evidence="1">
        <text>NADH + H2O = reduced beta-nicotinamide D-ribonucleotide + AMP + 2 H(+)</text>
        <dbReference type="Rhea" id="RHEA:48868"/>
        <dbReference type="ChEBI" id="CHEBI:15377"/>
        <dbReference type="ChEBI" id="CHEBI:15378"/>
        <dbReference type="ChEBI" id="CHEBI:57945"/>
        <dbReference type="ChEBI" id="CHEBI:90832"/>
        <dbReference type="ChEBI" id="CHEBI:456215"/>
        <dbReference type="EC" id="3.6.1.22"/>
    </reaction>
</comment>
<comment type="cofactor">
    <cofactor evidence="1">
        <name>Mg(2+)</name>
        <dbReference type="ChEBI" id="CHEBI:18420"/>
    </cofactor>
    <cofactor evidence="1">
        <name>Mn(2+)</name>
        <dbReference type="ChEBI" id="CHEBI:29035"/>
    </cofactor>
    <text evidence="1">Divalent metal cations. Mg(2+) or Mn(2+).</text>
</comment>
<comment type="cofactor">
    <cofactor evidence="1">
        <name>Zn(2+)</name>
        <dbReference type="ChEBI" id="CHEBI:29105"/>
    </cofactor>
    <text evidence="1">Binds 1 zinc ion per subunit.</text>
</comment>
<comment type="subunit">
    <text evidence="1">Homodimer.</text>
</comment>
<comment type="similarity">
    <text evidence="1">Belongs to the Nudix hydrolase family. NudC subfamily.</text>
</comment>
<feature type="chain" id="PRO_1000119463" description="NAD-capped RNA hydrolase NudC">
    <location>
        <begin position="1"/>
        <end position="257"/>
    </location>
</feature>
<feature type="domain" description="Nudix hydrolase" evidence="1">
    <location>
        <begin position="125"/>
        <end position="248"/>
    </location>
</feature>
<feature type="short sequence motif" description="Nudix box" evidence="1">
    <location>
        <begin position="159"/>
        <end position="180"/>
    </location>
</feature>
<feature type="binding site" evidence="1">
    <location>
        <position position="25"/>
    </location>
    <ligand>
        <name>substrate</name>
    </ligand>
</feature>
<feature type="binding site" evidence="1">
    <location>
        <position position="69"/>
    </location>
    <ligand>
        <name>substrate</name>
    </ligand>
</feature>
<feature type="binding site" evidence="1">
    <location>
        <position position="98"/>
    </location>
    <ligand>
        <name>Zn(2+)</name>
        <dbReference type="ChEBI" id="CHEBI:29105"/>
    </ligand>
</feature>
<feature type="binding site" evidence="1">
    <location>
        <position position="101"/>
    </location>
    <ligand>
        <name>Zn(2+)</name>
        <dbReference type="ChEBI" id="CHEBI:29105"/>
    </ligand>
</feature>
<feature type="binding site" evidence="1">
    <location>
        <position position="111"/>
    </location>
    <ligand>
        <name>substrate</name>
    </ligand>
</feature>
<feature type="binding site" evidence="1">
    <location>
        <position position="116"/>
    </location>
    <ligand>
        <name>Zn(2+)</name>
        <dbReference type="ChEBI" id="CHEBI:29105"/>
    </ligand>
</feature>
<feature type="binding site" evidence="1">
    <location>
        <position position="119"/>
    </location>
    <ligand>
        <name>Zn(2+)</name>
        <dbReference type="ChEBI" id="CHEBI:29105"/>
    </ligand>
</feature>
<feature type="binding site" evidence="1">
    <location>
        <position position="124"/>
    </location>
    <ligand>
        <name>substrate</name>
    </ligand>
</feature>
<feature type="binding site" evidence="1">
    <location>
        <position position="158"/>
    </location>
    <ligand>
        <name>a divalent metal cation</name>
        <dbReference type="ChEBI" id="CHEBI:60240"/>
        <label>1</label>
    </ligand>
</feature>
<feature type="binding site" evidence="1">
    <location>
        <position position="174"/>
    </location>
    <ligand>
        <name>a divalent metal cation</name>
        <dbReference type="ChEBI" id="CHEBI:60240"/>
        <label>2</label>
    </ligand>
</feature>
<feature type="binding site" evidence="1">
    <location>
        <position position="174"/>
    </location>
    <ligand>
        <name>a divalent metal cation</name>
        <dbReference type="ChEBI" id="CHEBI:60240"/>
        <label>3</label>
    </ligand>
</feature>
<feature type="binding site" evidence="1">
    <location>
        <position position="178"/>
    </location>
    <ligand>
        <name>a divalent metal cation</name>
        <dbReference type="ChEBI" id="CHEBI:60240"/>
        <label>1</label>
    </ligand>
</feature>
<feature type="binding site" evidence="1">
    <location>
        <position position="178"/>
    </location>
    <ligand>
        <name>a divalent metal cation</name>
        <dbReference type="ChEBI" id="CHEBI:60240"/>
        <label>3</label>
    </ligand>
</feature>
<feature type="binding site" evidence="1">
    <location>
        <begin position="192"/>
        <end position="199"/>
    </location>
    <ligand>
        <name>substrate</name>
    </ligand>
</feature>
<feature type="binding site" evidence="1">
    <location>
        <position position="219"/>
    </location>
    <ligand>
        <name>a divalent metal cation</name>
        <dbReference type="ChEBI" id="CHEBI:60240"/>
        <label>1</label>
    </ligand>
</feature>
<feature type="binding site" evidence="1">
    <location>
        <position position="219"/>
    </location>
    <ligand>
        <name>a divalent metal cation</name>
        <dbReference type="ChEBI" id="CHEBI:60240"/>
        <label>3</label>
    </ligand>
</feature>
<feature type="binding site" evidence="1">
    <location>
        <position position="241"/>
    </location>
    <ligand>
        <name>substrate</name>
    </ligand>
</feature>
<dbReference type="EC" id="3.6.1.-" evidence="1"/>
<dbReference type="EC" id="3.6.1.22" evidence="1"/>
<dbReference type="EMBL" id="CU928163">
    <property type="protein sequence ID" value="CAR15644.1"/>
    <property type="molecule type" value="Genomic_DNA"/>
</dbReference>
<dbReference type="RefSeq" id="WP_000373929.1">
    <property type="nucleotide sequence ID" value="NC_011751.1"/>
</dbReference>
<dbReference type="RefSeq" id="YP_002415134.1">
    <property type="nucleotide sequence ID" value="NC_011751.1"/>
</dbReference>
<dbReference type="SMR" id="B7NFT7"/>
<dbReference type="STRING" id="585056.ECUMN_4520"/>
<dbReference type="GeneID" id="75169442"/>
<dbReference type="KEGG" id="eum:ECUMN_4520"/>
<dbReference type="PATRIC" id="fig|585056.7.peg.4690"/>
<dbReference type="HOGENOM" id="CLU_037162_0_1_6"/>
<dbReference type="Proteomes" id="UP000007097">
    <property type="component" value="Chromosome"/>
</dbReference>
<dbReference type="GO" id="GO:0005829">
    <property type="term" value="C:cytosol"/>
    <property type="evidence" value="ECO:0007669"/>
    <property type="project" value="TreeGrafter"/>
</dbReference>
<dbReference type="GO" id="GO:0000287">
    <property type="term" value="F:magnesium ion binding"/>
    <property type="evidence" value="ECO:0007669"/>
    <property type="project" value="UniProtKB-UniRule"/>
</dbReference>
<dbReference type="GO" id="GO:0030145">
    <property type="term" value="F:manganese ion binding"/>
    <property type="evidence" value="ECO:0007669"/>
    <property type="project" value="UniProtKB-UniRule"/>
</dbReference>
<dbReference type="GO" id="GO:0000210">
    <property type="term" value="F:NAD+ diphosphatase activity"/>
    <property type="evidence" value="ECO:0007669"/>
    <property type="project" value="UniProtKB-UniRule"/>
</dbReference>
<dbReference type="GO" id="GO:0035529">
    <property type="term" value="F:NADH pyrophosphatase activity"/>
    <property type="evidence" value="ECO:0007669"/>
    <property type="project" value="TreeGrafter"/>
</dbReference>
<dbReference type="GO" id="GO:0110153">
    <property type="term" value="F:RNA NAD-cap (NMN-forming) hydrolase activity"/>
    <property type="evidence" value="ECO:0007669"/>
    <property type="project" value="RHEA"/>
</dbReference>
<dbReference type="GO" id="GO:0008270">
    <property type="term" value="F:zinc ion binding"/>
    <property type="evidence" value="ECO:0007669"/>
    <property type="project" value="UniProtKB-UniRule"/>
</dbReference>
<dbReference type="GO" id="GO:0019677">
    <property type="term" value="P:NAD catabolic process"/>
    <property type="evidence" value="ECO:0007669"/>
    <property type="project" value="TreeGrafter"/>
</dbReference>
<dbReference type="GO" id="GO:0006734">
    <property type="term" value="P:NADH metabolic process"/>
    <property type="evidence" value="ECO:0007669"/>
    <property type="project" value="TreeGrafter"/>
</dbReference>
<dbReference type="GO" id="GO:0006742">
    <property type="term" value="P:NADP catabolic process"/>
    <property type="evidence" value="ECO:0007669"/>
    <property type="project" value="TreeGrafter"/>
</dbReference>
<dbReference type="CDD" id="cd03429">
    <property type="entry name" value="NUDIX_NADH_pyrophosphatase_Nudt13"/>
    <property type="match status" value="1"/>
</dbReference>
<dbReference type="FunFam" id="3.90.79.10:FF:000004">
    <property type="entry name" value="NADH pyrophosphatase"/>
    <property type="match status" value="1"/>
</dbReference>
<dbReference type="FunFam" id="3.90.79.20:FF:000001">
    <property type="entry name" value="NADH pyrophosphatase"/>
    <property type="match status" value="1"/>
</dbReference>
<dbReference type="Gene3D" id="3.90.79.20">
    <property type="match status" value="1"/>
</dbReference>
<dbReference type="Gene3D" id="3.90.79.10">
    <property type="entry name" value="Nucleoside Triphosphate Pyrophosphohydrolase"/>
    <property type="match status" value="1"/>
</dbReference>
<dbReference type="HAMAP" id="MF_00297">
    <property type="entry name" value="Nudix_NudC"/>
    <property type="match status" value="1"/>
</dbReference>
<dbReference type="InterPro" id="IPR050241">
    <property type="entry name" value="NAD-cap_RNA_hydrolase_NudC"/>
</dbReference>
<dbReference type="InterPro" id="IPR049734">
    <property type="entry name" value="NudC-like_C"/>
</dbReference>
<dbReference type="InterPro" id="IPR015797">
    <property type="entry name" value="NUDIX_hydrolase-like_dom_sf"/>
</dbReference>
<dbReference type="InterPro" id="IPR020084">
    <property type="entry name" value="NUDIX_hydrolase_CS"/>
</dbReference>
<dbReference type="InterPro" id="IPR000086">
    <property type="entry name" value="NUDIX_hydrolase_dom"/>
</dbReference>
<dbReference type="InterPro" id="IPR022925">
    <property type="entry name" value="RNA_Hydrolase_NudC"/>
</dbReference>
<dbReference type="InterPro" id="IPR015376">
    <property type="entry name" value="Znr_NADH_PPase"/>
</dbReference>
<dbReference type="NCBIfam" id="NF001299">
    <property type="entry name" value="PRK00241.1"/>
    <property type="match status" value="1"/>
</dbReference>
<dbReference type="PANTHER" id="PTHR42904:SF6">
    <property type="entry name" value="NAD-CAPPED RNA HYDROLASE NUDT12"/>
    <property type="match status" value="1"/>
</dbReference>
<dbReference type="PANTHER" id="PTHR42904">
    <property type="entry name" value="NUDIX HYDROLASE, NUDC SUBFAMILY"/>
    <property type="match status" value="1"/>
</dbReference>
<dbReference type="Pfam" id="PF00293">
    <property type="entry name" value="NUDIX"/>
    <property type="match status" value="1"/>
</dbReference>
<dbReference type="Pfam" id="PF09297">
    <property type="entry name" value="Zn_ribbon_NUD"/>
    <property type="match status" value="1"/>
</dbReference>
<dbReference type="SUPFAM" id="SSF55811">
    <property type="entry name" value="Nudix"/>
    <property type="match status" value="2"/>
</dbReference>
<dbReference type="PROSITE" id="PS51462">
    <property type="entry name" value="NUDIX"/>
    <property type="match status" value="1"/>
</dbReference>
<dbReference type="PROSITE" id="PS00893">
    <property type="entry name" value="NUDIX_BOX"/>
    <property type="match status" value="1"/>
</dbReference>
<evidence type="ECO:0000255" key="1">
    <source>
        <dbReference type="HAMAP-Rule" id="MF_00297"/>
    </source>
</evidence>
<gene>
    <name evidence="1" type="primary">nudC</name>
    <name type="ordered locus">ECUMN_4520</name>
</gene>
<organism>
    <name type="scientific">Escherichia coli O17:K52:H18 (strain UMN026 / ExPEC)</name>
    <dbReference type="NCBI Taxonomy" id="585056"/>
    <lineage>
        <taxon>Bacteria</taxon>
        <taxon>Pseudomonadati</taxon>
        <taxon>Pseudomonadota</taxon>
        <taxon>Gammaproteobacteria</taxon>
        <taxon>Enterobacterales</taxon>
        <taxon>Enterobacteriaceae</taxon>
        <taxon>Escherichia</taxon>
    </lineage>
</organism>
<accession>B7NFT7</accession>
<keyword id="KW-0378">Hydrolase</keyword>
<keyword id="KW-0460">Magnesium</keyword>
<keyword id="KW-0464">Manganese</keyword>
<keyword id="KW-0479">Metal-binding</keyword>
<keyword id="KW-0520">NAD</keyword>
<keyword id="KW-0862">Zinc</keyword>
<sequence length="257" mass="29703">MDRIIEKLDHGWWVVSHEQKLWLPKGELPYGEAANFDLVGQRALQIGEWQGEPVWLIQQQRRHDMGSVRQVIDLDVGLFQLAGRGVQLAEFYRSHKYCGYCGHEMYPSKTEWAMLCSHCRERYYPQIAPCIIVAIRRDDSILLAQHTRHRNGVHTVLAGFVEVGETLEQAVAREVMEESGIKVKNLRYVTSQPWPFPQSLMTAFMAEYDSGDIVIDPKELLEANWYRYDDLPLLPPPGTVARRLIEDTVAMCRAEYE</sequence>